<reference key="1">
    <citation type="journal article" date="2005" name="J. Bacteriol.">
        <title>Insights on evolution of virulence and resistance from the complete genome analysis of an early methicillin-resistant Staphylococcus aureus strain and a biofilm-producing methicillin-resistant Staphylococcus epidermidis strain.</title>
        <authorList>
            <person name="Gill S.R."/>
            <person name="Fouts D.E."/>
            <person name="Archer G.L."/>
            <person name="Mongodin E.F."/>
            <person name="DeBoy R.T."/>
            <person name="Ravel J."/>
            <person name="Paulsen I.T."/>
            <person name="Kolonay J.F."/>
            <person name="Brinkac L.M."/>
            <person name="Beanan M.J."/>
            <person name="Dodson R.J."/>
            <person name="Daugherty S.C."/>
            <person name="Madupu R."/>
            <person name="Angiuoli S.V."/>
            <person name="Durkin A.S."/>
            <person name="Haft D.H."/>
            <person name="Vamathevan J.J."/>
            <person name="Khouri H."/>
            <person name="Utterback T.R."/>
            <person name="Lee C."/>
            <person name="Dimitrov G."/>
            <person name="Jiang L."/>
            <person name="Qin H."/>
            <person name="Weidman J."/>
            <person name="Tran K."/>
            <person name="Kang K.H."/>
            <person name="Hance I.R."/>
            <person name="Nelson K.E."/>
            <person name="Fraser C.M."/>
        </authorList>
    </citation>
    <scope>NUCLEOTIDE SEQUENCE [LARGE SCALE GENOMIC DNA]</scope>
    <source>
        <strain>COL</strain>
    </source>
</reference>
<sequence length="492" mass="54348">MKKAILSVSNKTGIVEFAKALTQLNYELYSTGGTKRILDEANVPVRSVSDLTHFPEIMDGRVKTLHPAVHGGILADRNKPQHLNELSEQHIDLIDMVVVNLYPFQQTVANPDVTMDEAIENIDIGGPTMLRAAAKNYKHVTTIVHPADYQEVLTRLRNDSLDESYRQSLMIKVFEHTAEYDEAIVRFFKGDKETLRYGENPQQSAYFVRTSNAKHTIAGAKQLHGKQLSYNNIKDADATLALVKKFDTPATVAVKHMNPCGVGIGDTIEQAFQHAYEADSQSIFGGIVALNRAVTPELAEQLHSIFLEVIIAPKFTDEALDILKQKKNVRLLEIDMTIDSNEEEFVSVSGGYLVQDKDNYVVPKEEMKVVTEVAPTDEQWEAMLLGWKVVPSVKSNAIILSNNKQTVGIGAGQMNRVGAAKIALERAIEINDHVALVSDGFFPMGDTVELAAQHGIKAIIQPGGSIKDQDSIDMANKHGIAMVVTGTRHFKH</sequence>
<organism>
    <name type="scientific">Staphylococcus aureus (strain COL)</name>
    <dbReference type="NCBI Taxonomy" id="93062"/>
    <lineage>
        <taxon>Bacteria</taxon>
        <taxon>Bacillati</taxon>
        <taxon>Bacillota</taxon>
        <taxon>Bacilli</taxon>
        <taxon>Bacillales</taxon>
        <taxon>Staphylococcaceae</taxon>
        <taxon>Staphylococcus</taxon>
    </lineage>
</organism>
<dbReference type="EC" id="2.1.2.3" evidence="1"/>
<dbReference type="EC" id="3.5.4.10" evidence="1"/>
<dbReference type="EMBL" id="CP000046">
    <property type="protein sequence ID" value="AAW37962.1"/>
    <property type="molecule type" value="Genomic_DNA"/>
</dbReference>
<dbReference type="RefSeq" id="WP_000709290.1">
    <property type="nucleotide sequence ID" value="NZ_JBGOFO010000002.1"/>
</dbReference>
<dbReference type="SMR" id="Q5HH11"/>
<dbReference type="KEGG" id="sac:SACOL1082"/>
<dbReference type="HOGENOM" id="CLU_016316_5_2_9"/>
<dbReference type="UniPathway" id="UPA00074">
    <property type="reaction ID" value="UER00133"/>
</dbReference>
<dbReference type="UniPathway" id="UPA00074">
    <property type="reaction ID" value="UER00135"/>
</dbReference>
<dbReference type="Proteomes" id="UP000000530">
    <property type="component" value="Chromosome"/>
</dbReference>
<dbReference type="GO" id="GO:0005829">
    <property type="term" value="C:cytosol"/>
    <property type="evidence" value="ECO:0007669"/>
    <property type="project" value="TreeGrafter"/>
</dbReference>
<dbReference type="GO" id="GO:0003937">
    <property type="term" value="F:IMP cyclohydrolase activity"/>
    <property type="evidence" value="ECO:0007669"/>
    <property type="project" value="UniProtKB-UniRule"/>
</dbReference>
<dbReference type="GO" id="GO:0004643">
    <property type="term" value="F:phosphoribosylaminoimidazolecarboxamide formyltransferase activity"/>
    <property type="evidence" value="ECO:0007669"/>
    <property type="project" value="UniProtKB-UniRule"/>
</dbReference>
<dbReference type="GO" id="GO:0006189">
    <property type="term" value="P:'de novo' IMP biosynthetic process"/>
    <property type="evidence" value="ECO:0007669"/>
    <property type="project" value="UniProtKB-UniRule"/>
</dbReference>
<dbReference type="CDD" id="cd01421">
    <property type="entry name" value="IMPCH"/>
    <property type="match status" value="1"/>
</dbReference>
<dbReference type="FunFam" id="3.40.140.20:FF:000001">
    <property type="entry name" value="Bifunctional purine biosynthesis protein PurH"/>
    <property type="match status" value="1"/>
</dbReference>
<dbReference type="FunFam" id="3.40.140.20:FF:000002">
    <property type="entry name" value="Bifunctional purine biosynthesis protein PurH"/>
    <property type="match status" value="1"/>
</dbReference>
<dbReference type="FunFam" id="3.40.50.1380:FF:000001">
    <property type="entry name" value="Bifunctional purine biosynthesis protein PurH"/>
    <property type="match status" value="1"/>
</dbReference>
<dbReference type="Gene3D" id="3.40.140.20">
    <property type="match status" value="2"/>
</dbReference>
<dbReference type="Gene3D" id="3.40.50.1380">
    <property type="entry name" value="Methylglyoxal synthase-like domain"/>
    <property type="match status" value="1"/>
</dbReference>
<dbReference type="HAMAP" id="MF_00139">
    <property type="entry name" value="PurH"/>
    <property type="match status" value="1"/>
</dbReference>
<dbReference type="InterPro" id="IPR024051">
    <property type="entry name" value="AICAR_Tfase_dup_dom_sf"/>
</dbReference>
<dbReference type="InterPro" id="IPR016193">
    <property type="entry name" value="Cytidine_deaminase-like"/>
</dbReference>
<dbReference type="InterPro" id="IPR011607">
    <property type="entry name" value="MGS-like_dom"/>
</dbReference>
<dbReference type="InterPro" id="IPR036914">
    <property type="entry name" value="MGS-like_dom_sf"/>
</dbReference>
<dbReference type="InterPro" id="IPR002695">
    <property type="entry name" value="PurH-like"/>
</dbReference>
<dbReference type="NCBIfam" id="NF002049">
    <property type="entry name" value="PRK00881.1"/>
    <property type="match status" value="1"/>
</dbReference>
<dbReference type="NCBIfam" id="TIGR00355">
    <property type="entry name" value="purH"/>
    <property type="match status" value="1"/>
</dbReference>
<dbReference type="PANTHER" id="PTHR11692:SF0">
    <property type="entry name" value="BIFUNCTIONAL PURINE BIOSYNTHESIS PROTEIN ATIC"/>
    <property type="match status" value="1"/>
</dbReference>
<dbReference type="PANTHER" id="PTHR11692">
    <property type="entry name" value="BIFUNCTIONAL PURINE BIOSYNTHESIS PROTEIN PURH"/>
    <property type="match status" value="1"/>
</dbReference>
<dbReference type="Pfam" id="PF01808">
    <property type="entry name" value="AICARFT_IMPCHas"/>
    <property type="match status" value="1"/>
</dbReference>
<dbReference type="Pfam" id="PF02142">
    <property type="entry name" value="MGS"/>
    <property type="match status" value="1"/>
</dbReference>
<dbReference type="PIRSF" id="PIRSF000414">
    <property type="entry name" value="AICARFT_IMPCHas"/>
    <property type="match status" value="1"/>
</dbReference>
<dbReference type="SMART" id="SM00798">
    <property type="entry name" value="AICARFT_IMPCHas"/>
    <property type="match status" value="1"/>
</dbReference>
<dbReference type="SMART" id="SM00851">
    <property type="entry name" value="MGS"/>
    <property type="match status" value="1"/>
</dbReference>
<dbReference type="SUPFAM" id="SSF53927">
    <property type="entry name" value="Cytidine deaminase-like"/>
    <property type="match status" value="1"/>
</dbReference>
<dbReference type="SUPFAM" id="SSF52335">
    <property type="entry name" value="Methylglyoxal synthase-like"/>
    <property type="match status" value="1"/>
</dbReference>
<dbReference type="PROSITE" id="PS51855">
    <property type="entry name" value="MGS"/>
    <property type="match status" value="1"/>
</dbReference>
<proteinExistence type="inferred from homology"/>
<accession>Q5HH11</accession>
<protein>
    <recommendedName>
        <fullName evidence="1">Bifunctional purine biosynthesis protein PurH</fullName>
    </recommendedName>
    <domain>
        <recommendedName>
            <fullName evidence="1">Phosphoribosylaminoimidazolecarboxamide formyltransferase</fullName>
            <ecNumber evidence="1">2.1.2.3</ecNumber>
        </recommendedName>
        <alternativeName>
            <fullName evidence="1">AICAR transformylase</fullName>
        </alternativeName>
    </domain>
    <domain>
        <recommendedName>
            <fullName evidence="1">IMP cyclohydrolase</fullName>
            <ecNumber evidence="1">3.5.4.10</ecNumber>
        </recommendedName>
        <alternativeName>
            <fullName evidence="1">ATIC</fullName>
        </alternativeName>
        <alternativeName>
            <fullName evidence="1">IMP synthase</fullName>
        </alternativeName>
        <alternativeName>
            <fullName evidence="1">Inosinicase</fullName>
        </alternativeName>
    </domain>
</protein>
<feature type="chain" id="PRO_0000192122" description="Bifunctional purine biosynthesis protein PurH">
    <location>
        <begin position="1"/>
        <end position="492"/>
    </location>
</feature>
<feature type="domain" description="MGS-like" evidence="2">
    <location>
        <begin position="1"/>
        <end position="144"/>
    </location>
</feature>
<keyword id="KW-0378">Hydrolase</keyword>
<keyword id="KW-0511">Multifunctional enzyme</keyword>
<keyword id="KW-0658">Purine biosynthesis</keyword>
<keyword id="KW-0808">Transferase</keyword>
<name>PUR9_STAAC</name>
<comment type="catalytic activity">
    <reaction evidence="1">
        <text>(6R)-10-formyltetrahydrofolate + 5-amino-1-(5-phospho-beta-D-ribosyl)imidazole-4-carboxamide = 5-formamido-1-(5-phospho-D-ribosyl)imidazole-4-carboxamide + (6S)-5,6,7,8-tetrahydrofolate</text>
        <dbReference type="Rhea" id="RHEA:22192"/>
        <dbReference type="ChEBI" id="CHEBI:57453"/>
        <dbReference type="ChEBI" id="CHEBI:58467"/>
        <dbReference type="ChEBI" id="CHEBI:58475"/>
        <dbReference type="ChEBI" id="CHEBI:195366"/>
        <dbReference type="EC" id="2.1.2.3"/>
    </reaction>
</comment>
<comment type="catalytic activity">
    <reaction evidence="1">
        <text>IMP + H2O = 5-formamido-1-(5-phospho-D-ribosyl)imidazole-4-carboxamide</text>
        <dbReference type="Rhea" id="RHEA:18445"/>
        <dbReference type="ChEBI" id="CHEBI:15377"/>
        <dbReference type="ChEBI" id="CHEBI:58053"/>
        <dbReference type="ChEBI" id="CHEBI:58467"/>
        <dbReference type="EC" id="3.5.4.10"/>
    </reaction>
</comment>
<comment type="pathway">
    <text evidence="1">Purine metabolism; IMP biosynthesis via de novo pathway; 5-formamido-1-(5-phospho-D-ribosyl)imidazole-4-carboxamide from 5-amino-1-(5-phospho-D-ribosyl)imidazole-4-carboxamide (10-formyl THF route): step 1/1.</text>
</comment>
<comment type="pathway">
    <text evidence="1">Purine metabolism; IMP biosynthesis via de novo pathway; IMP from 5-formamido-1-(5-phospho-D-ribosyl)imidazole-4-carboxamide: step 1/1.</text>
</comment>
<comment type="domain">
    <text evidence="1">The IMP cyclohydrolase activity resides in the N-terminal region.</text>
</comment>
<comment type="similarity">
    <text evidence="1">Belongs to the PurH family.</text>
</comment>
<evidence type="ECO:0000255" key="1">
    <source>
        <dbReference type="HAMAP-Rule" id="MF_00139"/>
    </source>
</evidence>
<evidence type="ECO:0000255" key="2">
    <source>
        <dbReference type="PROSITE-ProRule" id="PRU01202"/>
    </source>
</evidence>
<gene>
    <name evidence="1" type="primary">purH</name>
    <name type="ordered locus">SACOL1082</name>
</gene>